<gene>
    <name evidence="4" type="primary">cysE</name>
    <name type="ordered locus">BPUM_0078</name>
</gene>
<proteinExistence type="inferred from homology"/>
<organism>
    <name type="scientific">Bacillus pumilus (strain SAFR-032)</name>
    <dbReference type="NCBI Taxonomy" id="315750"/>
    <lineage>
        <taxon>Bacteria</taxon>
        <taxon>Bacillati</taxon>
        <taxon>Bacillota</taxon>
        <taxon>Bacilli</taxon>
        <taxon>Bacillales</taxon>
        <taxon>Bacillaceae</taxon>
        <taxon>Bacillus</taxon>
    </lineage>
</organism>
<comment type="function">
    <text evidence="2">Catalyzes the acetylation of serine by acetyl-CoA to produce O-acetylserine (OAS).</text>
</comment>
<comment type="catalytic activity">
    <reaction evidence="2">
        <text>L-serine + acetyl-CoA = O-acetyl-L-serine + CoA</text>
        <dbReference type="Rhea" id="RHEA:24560"/>
        <dbReference type="ChEBI" id="CHEBI:33384"/>
        <dbReference type="ChEBI" id="CHEBI:57287"/>
        <dbReference type="ChEBI" id="CHEBI:57288"/>
        <dbReference type="ChEBI" id="CHEBI:58340"/>
        <dbReference type="EC" id="2.3.1.30"/>
    </reaction>
</comment>
<comment type="activity regulation">
    <text evidence="2">Inhibited by cysteine.</text>
</comment>
<comment type="pathway">
    <text evidence="2">Amino-acid biosynthesis; L-cysteine biosynthesis; L-cysteine from L-serine: step 1/2.</text>
</comment>
<comment type="subcellular location">
    <subcellularLocation>
        <location evidence="1">Cytoplasm</location>
    </subcellularLocation>
</comment>
<comment type="similarity">
    <text evidence="3">Belongs to the transferase hexapeptide repeat family.</text>
</comment>
<feature type="chain" id="PRO_0000404153" description="Serine acetyltransferase">
    <location>
        <begin position="1"/>
        <end position="217"/>
    </location>
</feature>
<protein>
    <recommendedName>
        <fullName evidence="2">Serine acetyltransferase</fullName>
        <shortName evidence="2">SAT</shortName>
        <ecNumber>2.3.1.30</ecNumber>
    </recommendedName>
</protein>
<accession>A8F961</accession>
<evidence type="ECO:0000250" key="1">
    <source>
        <dbReference type="UniProtKB" id="P0A9D4"/>
    </source>
</evidence>
<evidence type="ECO:0000250" key="2">
    <source>
        <dbReference type="UniProtKB" id="Q06750"/>
    </source>
</evidence>
<evidence type="ECO:0000255" key="3"/>
<evidence type="ECO:0000312" key="4">
    <source>
        <dbReference type="EMBL" id="ABV60778.1"/>
    </source>
</evidence>
<reference evidence="4" key="1">
    <citation type="journal article" date="2007" name="PLoS ONE">
        <title>Paradoxical DNA repair and peroxide resistance gene conservation in Bacillus pumilus SAFR-032.</title>
        <authorList>
            <person name="Gioia J."/>
            <person name="Yerrapragada S."/>
            <person name="Qin X."/>
            <person name="Jiang H."/>
            <person name="Igboeli O.C."/>
            <person name="Muzny D."/>
            <person name="Dugan-Rocha S."/>
            <person name="Ding Y."/>
            <person name="Hawes A."/>
            <person name="Liu W."/>
            <person name="Perez L."/>
            <person name="Kovar C."/>
            <person name="Dinh H."/>
            <person name="Lee S."/>
            <person name="Nazareth L."/>
            <person name="Blyth P."/>
            <person name="Holder M."/>
            <person name="Buhay C."/>
            <person name="Tirumalai M.R."/>
            <person name="Liu Y."/>
            <person name="Dasgupta I."/>
            <person name="Bokhetache L."/>
            <person name="Fujita M."/>
            <person name="Karouia F."/>
            <person name="Eswara Moorthy P."/>
            <person name="Siefert J."/>
            <person name="Uzman A."/>
            <person name="Buzumbo P."/>
            <person name="Verma A."/>
            <person name="Zwiya H."/>
            <person name="McWilliams B.D."/>
            <person name="Olowu A."/>
            <person name="Clinkenbeard K.D."/>
            <person name="Newcombe D."/>
            <person name="Golebiewski L."/>
            <person name="Petrosino J.F."/>
            <person name="Nicholson W.L."/>
            <person name="Fox G.E."/>
            <person name="Venkateswaran K."/>
            <person name="Highlander S.K."/>
            <person name="Weinstock G.M."/>
        </authorList>
    </citation>
    <scope>NUCLEOTIDE SEQUENCE [LARGE SCALE GENOMIC DNA]</scope>
    <source>
        <strain>SAFR-032</strain>
    </source>
</reference>
<sequence>MFFKMLKEDIDTVFDQDPAARSYIEVVLTYSGLHAIWAHRIAHAFYKRKLYFLARIISQVSRFFTGVEIHPAATIGRRFFIDHGMGVVIGETCEIGDNVTVFQGVTLGGTGKEKGKRHPTILDDALIATGAKVLGSITVGKGAKIGAGSVVLKDVPDHSTVVGIPGRVVVQNGKKINRDLNHQDLPDPISDRFKELEREMEKLKGELASLSRKEEQS</sequence>
<dbReference type="EC" id="2.3.1.30"/>
<dbReference type="EMBL" id="CP000813">
    <property type="protein sequence ID" value="ABV60778.1"/>
    <property type="molecule type" value="Genomic_DNA"/>
</dbReference>
<dbReference type="RefSeq" id="WP_012008691.1">
    <property type="nucleotide sequence ID" value="NZ_VEIC01000024.1"/>
</dbReference>
<dbReference type="SMR" id="A8F961"/>
<dbReference type="STRING" id="315750.BPUM_0078"/>
<dbReference type="GeneID" id="5619322"/>
<dbReference type="KEGG" id="bpu:BPUM_0078"/>
<dbReference type="eggNOG" id="COG1045">
    <property type="taxonomic scope" value="Bacteria"/>
</dbReference>
<dbReference type="HOGENOM" id="CLU_051638_10_0_9"/>
<dbReference type="OrthoDB" id="9801456at2"/>
<dbReference type="UniPathway" id="UPA00136">
    <property type="reaction ID" value="UER00199"/>
</dbReference>
<dbReference type="Proteomes" id="UP000001355">
    <property type="component" value="Chromosome"/>
</dbReference>
<dbReference type="GO" id="GO:0005737">
    <property type="term" value="C:cytoplasm"/>
    <property type="evidence" value="ECO:0007669"/>
    <property type="project" value="UniProtKB-SubCell"/>
</dbReference>
<dbReference type="GO" id="GO:0009001">
    <property type="term" value="F:serine O-acetyltransferase activity"/>
    <property type="evidence" value="ECO:0007669"/>
    <property type="project" value="UniProtKB-EC"/>
</dbReference>
<dbReference type="GO" id="GO:0006535">
    <property type="term" value="P:cysteine biosynthetic process from serine"/>
    <property type="evidence" value="ECO:0007669"/>
    <property type="project" value="InterPro"/>
</dbReference>
<dbReference type="CDD" id="cd03354">
    <property type="entry name" value="LbH_SAT"/>
    <property type="match status" value="1"/>
</dbReference>
<dbReference type="FunFam" id="1.10.3130.10:FF:000002">
    <property type="entry name" value="Serine acetyltransferase"/>
    <property type="match status" value="1"/>
</dbReference>
<dbReference type="FunFam" id="2.160.10.10:FF:000007">
    <property type="entry name" value="Serine acetyltransferase"/>
    <property type="match status" value="1"/>
</dbReference>
<dbReference type="Gene3D" id="2.160.10.10">
    <property type="entry name" value="Hexapeptide repeat proteins"/>
    <property type="match status" value="1"/>
</dbReference>
<dbReference type="Gene3D" id="1.10.3130.10">
    <property type="entry name" value="serine acetyltransferase, domain 1"/>
    <property type="match status" value="1"/>
</dbReference>
<dbReference type="InterPro" id="IPR001451">
    <property type="entry name" value="Hexapep"/>
</dbReference>
<dbReference type="InterPro" id="IPR018357">
    <property type="entry name" value="Hexapep_transf_CS"/>
</dbReference>
<dbReference type="InterPro" id="IPR045304">
    <property type="entry name" value="LbH_SAT"/>
</dbReference>
<dbReference type="InterPro" id="IPR010493">
    <property type="entry name" value="Ser_AcTrfase_N"/>
</dbReference>
<dbReference type="InterPro" id="IPR042122">
    <property type="entry name" value="Ser_AcTrfase_N_sf"/>
</dbReference>
<dbReference type="InterPro" id="IPR005881">
    <property type="entry name" value="Ser_O-AcTrfase"/>
</dbReference>
<dbReference type="InterPro" id="IPR053376">
    <property type="entry name" value="Serine_acetyltransferase"/>
</dbReference>
<dbReference type="InterPro" id="IPR011004">
    <property type="entry name" value="Trimer_LpxA-like_sf"/>
</dbReference>
<dbReference type="NCBIfam" id="TIGR01172">
    <property type="entry name" value="cysE"/>
    <property type="match status" value="1"/>
</dbReference>
<dbReference type="NCBIfam" id="NF041874">
    <property type="entry name" value="EPS_EpsC"/>
    <property type="match status" value="1"/>
</dbReference>
<dbReference type="PANTHER" id="PTHR42811">
    <property type="entry name" value="SERINE ACETYLTRANSFERASE"/>
    <property type="match status" value="1"/>
</dbReference>
<dbReference type="Pfam" id="PF00132">
    <property type="entry name" value="Hexapep"/>
    <property type="match status" value="1"/>
</dbReference>
<dbReference type="Pfam" id="PF06426">
    <property type="entry name" value="SATase_N"/>
    <property type="match status" value="1"/>
</dbReference>
<dbReference type="PIRSF" id="PIRSF000441">
    <property type="entry name" value="CysE"/>
    <property type="match status" value="1"/>
</dbReference>
<dbReference type="SUPFAM" id="SSF51161">
    <property type="entry name" value="Trimeric LpxA-like enzymes"/>
    <property type="match status" value="1"/>
</dbReference>
<dbReference type="PROSITE" id="PS00101">
    <property type="entry name" value="HEXAPEP_TRANSFERASES"/>
    <property type="match status" value="1"/>
</dbReference>
<keyword id="KW-0012">Acyltransferase</keyword>
<keyword id="KW-0028">Amino-acid biosynthesis</keyword>
<keyword id="KW-0198">Cysteine biosynthesis</keyword>
<keyword id="KW-0963">Cytoplasm</keyword>
<keyword id="KW-0677">Repeat</keyword>
<keyword id="KW-0808">Transferase</keyword>
<name>CYSE_BACP2</name>